<reference key="1">
    <citation type="journal article" date="2006" name="Proc. Natl. Acad. Sci. U.S.A.">
        <title>Molecular genetic anatomy of inter- and intraserotype variation in the human bacterial pathogen group A Streptococcus.</title>
        <authorList>
            <person name="Beres S.B."/>
            <person name="Richter E.W."/>
            <person name="Nagiec M.J."/>
            <person name="Sumby P."/>
            <person name="Porcella S.F."/>
            <person name="DeLeo F.R."/>
            <person name="Musser J.M."/>
        </authorList>
    </citation>
    <scope>NUCLEOTIDE SEQUENCE [LARGE SCALE GENOMIC DNA]</scope>
    <source>
        <strain>MGAS2096</strain>
    </source>
</reference>
<comment type="function">
    <text evidence="1">Catalyzes a salvage reaction resulting in the formation of AMP, that is energically less costly than de novo synthesis.</text>
</comment>
<comment type="catalytic activity">
    <reaction evidence="1">
        <text>AMP + diphosphate = 5-phospho-alpha-D-ribose 1-diphosphate + adenine</text>
        <dbReference type="Rhea" id="RHEA:16609"/>
        <dbReference type="ChEBI" id="CHEBI:16708"/>
        <dbReference type="ChEBI" id="CHEBI:33019"/>
        <dbReference type="ChEBI" id="CHEBI:58017"/>
        <dbReference type="ChEBI" id="CHEBI:456215"/>
        <dbReference type="EC" id="2.4.2.7"/>
    </reaction>
</comment>
<comment type="pathway">
    <text evidence="1">Purine metabolism; AMP biosynthesis via salvage pathway; AMP from adenine: step 1/1.</text>
</comment>
<comment type="subunit">
    <text evidence="1">Homodimer.</text>
</comment>
<comment type="subcellular location">
    <subcellularLocation>
        <location evidence="1">Cytoplasm</location>
    </subcellularLocation>
</comment>
<comment type="similarity">
    <text evidence="1">Belongs to the purine/pyrimidine phosphoribosyltransferase family.</text>
</comment>
<gene>
    <name evidence="1" type="primary">apt</name>
    <name type="ordered locus">MGAS2096_Spy0800</name>
</gene>
<protein>
    <recommendedName>
        <fullName evidence="1">Adenine phosphoribosyltransferase</fullName>
        <shortName evidence="1">APRT</shortName>
        <ecNumber evidence="1">2.4.2.7</ecNumber>
    </recommendedName>
</protein>
<sequence>MDLTNYIASIKDYPKAGITFRDISPLMADGKAYSYAIREIAQYACDKDIDMVVGPEARGFIIGCPVAVELGIGFAPVRKPGKLPRDVVSADYEKEYGLDTLTMHADAIKPGQRVLIVDDLLATGGTVKATIEMIEKLGGIVAGCAFLIELEGLNGRHAIRNYDYKVLMQFPG</sequence>
<accession>Q1JC56</accession>
<name>APT_STRPB</name>
<organism>
    <name type="scientific">Streptococcus pyogenes serotype M12 (strain MGAS2096)</name>
    <dbReference type="NCBI Taxonomy" id="370553"/>
    <lineage>
        <taxon>Bacteria</taxon>
        <taxon>Bacillati</taxon>
        <taxon>Bacillota</taxon>
        <taxon>Bacilli</taxon>
        <taxon>Lactobacillales</taxon>
        <taxon>Streptococcaceae</taxon>
        <taxon>Streptococcus</taxon>
    </lineage>
</organism>
<dbReference type="EC" id="2.4.2.7" evidence="1"/>
<dbReference type="EMBL" id="CP000261">
    <property type="protein sequence ID" value="ABF35852.1"/>
    <property type="molecule type" value="Genomic_DNA"/>
</dbReference>
<dbReference type="SMR" id="Q1JC56"/>
<dbReference type="KEGG" id="spj:MGAS2096_Spy0800"/>
<dbReference type="HOGENOM" id="CLU_063339_3_0_9"/>
<dbReference type="UniPathway" id="UPA00588">
    <property type="reaction ID" value="UER00646"/>
</dbReference>
<dbReference type="GO" id="GO:0005737">
    <property type="term" value="C:cytoplasm"/>
    <property type="evidence" value="ECO:0007669"/>
    <property type="project" value="UniProtKB-SubCell"/>
</dbReference>
<dbReference type="GO" id="GO:0002055">
    <property type="term" value="F:adenine binding"/>
    <property type="evidence" value="ECO:0007669"/>
    <property type="project" value="TreeGrafter"/>
</dbReference>
<dbReference type="GO" id="GO:0003999">
    <property type="term" value="F:adenine phosphoribosyltransferase activity"/>
    <property type="evidence" value="ECO:0007669"/>
    <property type="project" value="UniProtKB-UniRule"/>
</dbReference>
<dbReference type="GO" id="GO:0016208">
    <property type="term" value="F:AMP binding"/>
    <property type="evidence" value="ECO:0007669"/>
    <property type="project" value="TreeGrafter"/>
</dbReference>
<dbReference type="GO" id="GO:0006168">
    <property type="term" value="P:adenine salvage"/>
    <property type="evidence" value="ECO:0007669"/>
    <property type="project" value="InterPro"/>
</dbReference>
<dbReference type="GO" id="GO:0044209">
    <property type="term" value="P:AMP salvage"/>
    <property type="evidence" value="ECO:0007669"/>
    <property type="project" value="UniProtKB-UniRule"/>
</dbReference>
<dbReference type="GO" id="GO:0006166">
    <property type="term" value="P:purine ribonucleoside salvage"/>
    <property type="evidence" value="ECO:0007669"/>
    <property type="project" value="UniProtKB-KW"/>
</dbReference>
<dbReference type="CDD" id="cd06223">
    <property type="entry name" value="PRTases_typeI"/>
    <property type="match status" value="1"/>
</dbReference>
<dbReference type="FunFam" id="3.40.50.2020:FF:000004">
    <property type="entry name" value="Adenine phosphoribosyltransferase"/>
    <property type="match status" value="1"/>
</dbReference>
<dbReference type="Gene3D" id="3.40.50.2020">
    <property type="match status" value="1"/>
</dbReference>
<dbReference type="HAMAP" id="MF_00004">
    <property type="entry name" value="Aden_phosphoribosyltr"/>
    <property type="match status" value="1"/>
</dbReference>
<dbReference type="InterPro" id="IPR005764">
    <property type="entry name" value="Ade_phspho_trans"/>
</dbReference>
<dbReference type="InterPro" id="IPR000836">
    <property type="entry name" value="PRibTrfase_dom"/>
</dbReference>
<dbReference type="InterPro" id="IPR029057">
    <property type="entry name" value="PRTase-like"/>
</dbReference>
<dbReference type="InterPro" id="IPR050054">
    <property type="entry name" value="UPRTase/APRTase"/>
</dbReference>
<dbReference type="NCBIfam" id="TIGR01090">
    <property type="entry name" value="apt"/>
    <property type="match status" value="1"/>
</dbReference>
<dbReference type="NCBIfam" id="NF002633">
    <property type="entry name" value="PRK02304.1-2"/>
    <property type="match status" value="1"/>
</dbReference>
<dbReference type="NCBIfam" id="NF002634">
    <property type="entry name" value="PRK02304.1-3"/>
    <property type="match status" value="1"/>
</dbReference>
<dbReference type="NCBIfam" id="NF002636">
    <property type="entry name" value="PRK02304.1-5"/>
    <property type="match status" value="1"/>
</dbReference>
<dbReference type="PANTHER" id="PTHR32315">
    <property type="entry name" value="ADENINE PHOSPHORIBOSYLTRANSFERASE"/>
    <property type="match status" value="1"/>
</dbReference>
<dbReference type="PANTHER" id="PTHR32315:SF3">
    <property type="entry name" value="ADENINE PHOSPHORIBOSYLTRANSFERASE"/>
    <property type="match status" value="1"/>
</dbReference>
<dbReference type="Pfam" id="PF00156">
    <property type="entry name" value="Pribosyltran"/>
    <property type="match status" value="1"/>
</dbReference>
<dbReference type="SUPFAM" id="SSF53271">
    <property type="entry name" value="PRTase-like"/>
    <property type="match status" value="1"/>
</dbReference>
<dbReference type="PROSITE" id="PS00103">
    <property type="entry name" value="PUR_PYR_PR_TRANSFER"/>
    <property type="match status" value="1"/>
</dbReference>
<proteinExistence type="inferred from homology"/>
<feature type="chain" id="PRO_1000000352" description="Adenine phosphoribosyltransferase">
    <location>
        <begin position="1"/>
        <end position="172"/>
    </location>
</feature>
<keyword id="KW-0963">Cytoplasm</keyword>
<keyword id="KW-0328">Glycosyltransferase</keyword>
<keyword id="KW-0660">Purine salvage</keyword>
<keyword id="KW-0808">Transferase</keyword>
<evidence type="ECO:0000255" key="1">
    <source>
        <dbReference type="HAMAP-Rule" id="MF_00004"/>
    </source>
</evidence>